<comment type="function">
    <text evidence="1">Specifically methylates the N4 position of cytidine in position 1402 (C1402) of 16S rRNA.</text>
</comment>
<comment type="catalytic activity">
    <reaction evidence="1">
        <text>cytidine(1402) in 16S rRNA + S-adenosyl-L-methionine = N(4)-methylcytidine(1402) in 16S rRNA + S-adenosyl-L-homocysteine + H(+)</text>
        <dbReference type="Rhea" id="RHEA:42928"/>
        <dbReference type="Rhea" id="RHEA-COMP:10286"/>
        <dbReference type="Rhea" id="RHEA-COMP:10287"/>
        <dbReference type="ChEBI" id="CHEBI:15378"/>
        <dbReference type="ChEBI" id="CHEBI:57856"/>
        <dbReference type="ChEBI" id="CHEBI:59789"/>
        <dbReference type="ChEBI" id="CHEBI:74506"/>
        <dbReference type="ChEBI" id="CHEBI:82748"/>
        <dbReference type="EC" id="2.1.1.199"/>
    </reaction>
</comment>
<comment type="subcellular location">
    <subcellularLocation>
        <location evidence="1">Cytoplasm</location>
    </subcellularLocation>
</comment>
<comment type="similarity">
    <text evidence="1">Belongs to the methyltransferase superfamily. RsmH family.</text>
</comment>
<evidence type="ECO:0000255" key="1">
    <source>
        <dbReference type="HAMAP-Rule" id="MF_01007"/>
    </source>
</evidence>
<dbReference type="EC" id="2.1.1.199" evidence="1"/>
<dbReference type="EMBL" id="CP000890">
    <property type="protein sequence ID" value="ABX77636.1"/>
    <property type="molecule type" value="Genomic_DNA"/>
</dbReference>
<dbReference type="RefSeq" id="WP_005769446.1">
    <property type="nucleotide sequence ID" value="NC_010117.1"/>
</dbReference>
<dbReference type="SMR" id="A9NA25"/>
<dbReference type="KEGG" id="cbs:COXBURSA331_A0205"/>
<dbReference type="HOGENOM" id="CLU_038422_2_0_6"/>
<dbReference type="GO" id="GO:0005737">
    <property type="term" value="C:cytoplasm"/>
    <property type="evidence" value="ECO:0007669"/>
    <property type="project" value="UniProtKB-SubCell"/>
</dbReference>
<dbReference type="GO" id="GO:0071424">
    <property type="term" value="F:rRNA (cytosine-N4-)-methyltransferase activity"/>
    <property type="evidence" value="ECO:0007669"/>
    <property type="project" value="UniProtKB-UniRule"/>
</dbReference>
<dbReference type="GO" id="GO:0070475">
    <property type="term" value="P:rRNA base methylation"/>
    <property type="evidence" value="ECO:0007669"/>
    <property type="project" value="UniProtKB-UniRule"/>
</dbReference>
<dbReference type="FunFam" id="1.10.150.170:FF:000001">
    <property type="entry name" value="Ribosomal RNA small subunit methyltransferase H"/>
    <property type="match status" value="1"/>
</dbReference>
<dbReference type="Gene3D" id="1.10.150.170">
    <property type="entry name" value="Putative methyltransferase TM0872, insert domain"/>
    <property type="match status" value="1"/>
</dbReference>
<dbReference type="Gene3D" id="3.40.50.150">
    <property type="entry name" value="Vaccinia Virus protein VP39"/>
    <property type="match status" value="1"/>
</dbReference>
<dbReference type="HAMAP" id="MF_01007">
    <property type="entry name" value="16SrRNA_methyltr_H"/>
    <property type="match status" value="1"/>
</dbReference>
<dbReference type="InterPro" id="IPR002903">
    <property type="entry name" value="RsmH"/>
</dbReference>
<dbReference type="InterPro" id="IPR023397">
    <property type="entry name" value="SAM-dep_MeTrfase_MraW_recog"/>
</dbReference>
<dbReference type="InterPro" id="IPR029063">
    <property type="entry name" value="SAM-dependent_MTases_sf"/>
</dbReference>
<dbReference type="NCBIfam" id="TIGR00006">
    <property type="entry name" value="16S rRNA (cytosine(1402)-N(4))-methyltransferase RsmH"/>
    <property type="match status" value="1"/>
</dbReference>
<dbReference type="PANTHER" id="PTHR11265:SF0">
    <property type="entry name" value="12S RRNA N4-METHYLCYTIDINE METHYLTRANSFERASE"/>
    <property type="match status" value="1"/>
</dbReference>
<dbReference type="PANTHER" id="PTHR11265">
    <property type="entry name" value="S-ADENOSYL-METHYLTRANSFERASE MRAW"/>
    <property type="match status" value="1"/>
</dbReference>
<dbReference type="Pfam" id="PF01795">
    <property type="entry name" value="Methyltransf_5"/>
    <property type="match status" value="1"/>
</dbReference>
<dbReference type="PIRSF" id="PIRSF004486">
    <property type="entry name" value="MraW"/>
    <property type="match status" value="1"/>
</dbReference>
<dbReference type="SUPFAM" id="SSF81799">
    <property type="entry name" value="Putative methyltransferase TM0872, insert domain"/>
    <property type="match status" value="1"/>
</dbReference>
<dbReference type="SUPFAM" id="SSF53335">
    <property type="entry name" value="S-adenosyl-L-methionine-dependent methyltransferases"/>
    <property type="match status" value="1"/>
</dbReference>
<name>RSMH_COXBR</name>
<accession>A9NA25</accession>
<proteinExistence type="inferred from homology"/>
<gene>
    <name evidence="1" type="primary">rsmH</name>
    <name type="synonym">mraW</name>
    <name type="ordered locus">COXBURSA331_A0205</name>
</gene>
<organism>
    <name type="scientific">Coxiella burnetii (strain RSA 331 / Henzerling II)</name>
    <dbReference type="NCBI Taxonomy" id="360115"/>
    <lineage>
        <taxon>Bacteria</taxon>
        <taxon>Pseudomonadati</taxon>
        <taxon>Pseudomonadota</taxon>
        <taxon>Gammaproteobacteria</taxon>
        <taxon>Legionellales</taxon>
        <taxon>Coxiellaceae</taxon>
        <taxon>Coxiella</taxon>
    </lineage>
</organism>
<feature type="chain" id="PRO_0000386834" description="Ribosomal RNA small subunit methyltransferase H">
    <location>
        <begin position="1"/>
        <end position="307"/>
    </location>
</feature>
<feature type="binding site" evidence="1">
    <location>
        <begin position="32"/>
        <end position="34"/>
    </location>
    <ligand>
        <name>S-adenosyl-L-methionine</name>
        <dbReference type="ChEBI" id="CHEBI:59789"/>
    </ligand>
</feature>
<feature type="binding site" evidence="1">
    <location>
        <position position="52"/>
    </location>
    <ligand>
        <name>S-adenosyl-L-methionine</name>
        <dbReference type="ChEBI" id="CHEBI:59789"/>
    </ligand>
</feature>
<feature type="binding site" evidence="1">
    <location>
        <position position="78"/>
    </location>
    <ligand>
        <name>S-adenosyl-L-methionine</name>
        <dbReference type="ChEBI" id="CHEBI:59789"/>
    </ligand>
</feature>
<feature type="binding site" evidence="1">
    <location>
        <position position="100"/>
    </location>
    <ligand>
        <name>S-adenosyl-L-methionine</name>
        <dbReference type="ChEBI" id="CHEBI:59789"/>
    </ligand>
</feature>
<feature type="binding site" evidence="1">
    <location>
        <position position="107"/>
    </location>
    <ligand>
        <name>S-adenosyl-L-methionine</name>
        <dbReference type="ChEBI" id="CHEBI:59789"/>
    </ligand>
</feature>
<reference key="1">
    <citation type="submission" date="2007-11" db="EMBL/GenBank/DDBJ databases">
        <title>Genome sequencing of phylogenetically and phenotypically diverse Coxiella burnetii isolates.</title>
        <authorList>
            <person name="Seshadri R."/>
            <person name="Samuel J.E."/>
        </authorList>
    </citation>
    <scope>NUCLEOTIDE SEQUENCE [LARGE SCALE GENOMIC DNA]</scope>
    <source>
        <strain>RSA 331 / Henzerling II</strain>
    </source>
</reference>
<keyword id="KW-0963">Cytoplasm</keyword>
<keyword id="KW-0489">Methyltransferase</keyword>
<keyword id="KW-0698">rRNA processing</keyword>
<keyword id="KW-0949">S-adenosyl-L-methionine</keyword>
<keyword id="KW-0808">Transferase</keyword>
<protein>
    <recommendedName>
        <fullName evidence="1">Ribosomal RNA small subunit methyltransferase H</fullName>
        <ecNumber evidence="1">2.1.1.199</ecNumber>
    </recommendedName>
    <alternativeName>
        <fullName evidence="1">16S rRNA m(4)C1402 methyltransferase</fullName>
    </alternativeName>
    <alternativeName>
        <fullName evidence="1">rRNA (cytosine-N(4)-)-methyltransferase RsmH</fullName>
    </alternativeName>
</protein>
<sequence>MEAHKPVLFDEVMEGLAIRPDGIYVDGTFGRGGHSFGILQRLGPNGRLMAMDKDPDAVAVANKALFEDARFSIVHETFANLQKAVRDRGWEGKVNGILLDIGVSSPQLEDAKRGFSFSKDGPLDMRMNPKQSMDAASWINQAAMEDIRRVLWNYGEERFAKRIAQAIVNAREEKPITRTQELSDIVIKAYPQREIKKHPATRTFQAIRIFINRELDELRECLPQCLETLAVGGRLCVISFHSLEDRLVKRFIQKESRDHLPREIPILAKDIKHRLKPLGSLIRPTEAEIKKNPRARSARLRIVEKLS</sequence>